<organism>
    <name type="scientific">Xylella fastidiosa (strain Temecula1 / ATCC 700964)</name>
    <dbReference type="NCBI Taxonomy" id="183190"/>
    <lineage>
        <taxon>Bacteria</taxon>
        <taxon>Pseudomonadati</taxon>
        <taxon>Pseudomonadota</taxon>
        <taxon>Gammaproteobacteria</taxon>
        <taxon>Lysobacterales</taxon>
        <taxon>Lysobacteraceae</taxon>
        <taxon>Xylella</taxon>
    </lineage>
</organism>
<accession>P59606</accession>
<keyword id="KW-0028">Amino-acid biosynthesis</keyword>
<keyword id="KW-0055">Arginine biosynthesis</keyword>
<keyword id="KW-0067">ATP-binding</keyword>
<keyword id="KW-0963">Cytoplasm</keyword>
<keyword id="KW-0436">Ligase</keyword>
<keyword id="KW-0547">Nucleotide-binding</keyword>
<keyword id="KW-1185">Reference proteome</keyword>
<sequence>MSNKNIVLAFSGGLDTSFCIPYLKEQGYAVHTVFADTGGVDEDERDFIEKRAAELGVASHLTVDGGPAIWDGFVKQLVWAGEAYQGQYPLLVSDRYLIVDAVLQRADALGTCAVAHGCTGMGNDQVRFDLAIKAQGDYTIIAPIREIQKEHTQTRLYEQKYLEERGFGVRAKQKNYTINENLLGITLSGGEIDKWEAPGEGARGWCAPRSAWPTDPLTVAIKFVEGEAVAVDGKPLSGPQILMKLNKLFASYGVGRGIYTGDTVIGLKGRIVYEAPGLTALLTAHRALEDAVLTKQQNRFKPHIARKWVELVYEGFFHDPLKTDLETFLKSSQANVNGEIVLETRGGRVDAVAVRSPHILTSKGVTYAQTADWGIEEAEGFIKLFGMSSTLYAHVNRSLRS</sequence>
<reference key="1">
    <citation type="journal article" date="2003" name="J. Bacteriol.">
        <title>Comparative analyses of the complete genome sequences of Pierce's disease and citrus variegated chlorosis strains of Xylella fastidiosa.</title>
        <authorList>
            <person name="Van Sluys M.A."/>
            <person name="de Oliveira M.C."/>
            <person name="Monteiro-Vitorello C.B."/>
            <person name="Miyaki C.Y."/>
            <person name="Furlan L.R."/>
            <person name="Camargo L.E.A."/>
            <person name="da Silva A.C.R."/>
            <person name="Moon D.H."/>
            <person name="Takita M.A."/>
            <person name="Lemos E.G.M."/>
            <person name="Machado M.A."/>
            <person name="Ferro M.I.T."/>
            <person name="da Silva F.R."/>
            <person name="Goldman M.H.S."/>
            <person name="Goldman G.H."/>
            <person name="Lemos M.V.F."/>
            <person name="El-Dorry H."/>
            <person name="Tsai S.M."/>
            <person name="Carrer H."/>
            <person name="Carraro D.M."/>
            <person name="de Oliveira R.C."/>
            <person name="Nunes L.R."/>
            <person name="Siqueira W.J."/>
            <person name="Coutinho L.L."/>
            <person name="Kimura E.T."/>
            <person name="Ferro E.S."/>
            <person name="Harakava R."/>
            <person name="Kuramae E.E."/>
            <person name="Marino C.L."/>
            <person name="Giglioti E."/>
            <person name="Abreu I.L."/>
            <person name="Alves L.M.C."/>
            <person name="do Amaral A.M."/>
            <person name="Baia G.S."/>
            <person name="Blanco S.R."/>
            <person name="Brito M.S."/>
            <person name="Cannavan F.S."/>
            <person name="Celestino A.V."/>
            <person name="da Cunha A.F."/>
            <person name="Fenille R.C."/>
            <person name="Ferro J.A."/>
            <person name="Formighieri E.F."/>
            <person name="Kishi L.T."/>
            <person name="Leoni S.G."/>
            <person name="Oliveira A.R."/>
            <person name="Rosa V.E. Jr."/>
            <person name="Sassaki F.T."/>
            <person name="Sena J.A.D."/>
            <person name="de Souza A.A."/>
            <person name="Truffi D."/>
            <person name="Tsukumo F."/>
            <person name="Yanai G.M."/>
            <person name="Zaros L.G."/>
            <person name="Civerolo E.L."/>
            <person name="Simpson A.J.G."/>
            <person name="Almeida N.F. Jr."/>
            <person name="Setubal J.C."/>
            <person name="Kitajima J.P."/>
        </authorList>
    </citation>
    <scope>NUCLEOTIDE SEQUENCE [LARGE SCALE GENOMIC DNA]</scope>
    <source>
        <strain>Temecula1 / ATCC 700964</strain>
    </source>
</reference>
<feature type="chain" id="PRO_0000148669" description="Argininosuccinate synthase">
    <location>
        <begin position="1"/>
        <end position="401"/>
    </location>
</feature>
<feature type="binding site" evidence="1">
    <location>
        <begin position="9"/>
        <end position="17"/>
    </location>
    <ligand>
        <name>ATP</name>
        <dbReference type="ChEBI" id="CHEBI:30616"/>
    </ligand>
</feature>
<feature type="binding site" evidence="1">
    <location>
        <position position="35"/>
    </location>
    <ligand>
        <name>ATP</name>
        <dbReference type="ChEBI" id="CHEBI:30616"/>
    </ligand>
</feature>
<feature type="binding site" evidence="1">
    <location>
        <position position="88"/>
    </location>
    <ligand>
        <name>L-citrulline</name>
        <dbReference type="ChEBI" id="CHEBI:57743"/>
    </ligand>
</feature>
<feature type="binding site" evidence="1">
    <location>
        <position position="93"/>
    </location>
    <ligand>
        <name>L-citrulline</name>
        <dbReference type="ChEBI" id="CHEBI:57743"/>
    </ligand>
</feature>
<feature type="binding site" evidence="1">
    <location>
        <position position="117"/>
    </location>
    <ligand>
        <name>ATP</name>
        <dbReference type="ChEBI" id="CHEBI:30616"/>
    </ligand>
</feature>
<feature type="binding site" evidence="1">
    <location>
        <position position="119"/>
    </location>
    <ligand>
        <name>L-aspartate</name>
        <dbReference type="ChEBI" id="CHEBI:29991"/>
    </ligand>
</feature>
<feature type="binding site" evidence="1">
    <location>
        <position position="123"/>
    </location>
    <ligand>
        <name>L-aspartate</name>
        <dbReference type="ChEBI" id="CHEBI:29991"/>
    </ligand>
</feature>
<feature type="binding site" evidence="1">
    <location>
        <position position="123"/>
    </location>
    <ligand>
        <name>L-citrulline</name>
        <dbReference type="ChEBI" id="CHEBI:57743"/>
    </ligand>
</feature>
<feature type="binding site" evidence="1">
    <location>
        <position position="124"/>
    </location>
    <ligand>
        <name>L-aspartate</name>
        <dbReference type="ChEBI" id="CHEBI:29991"/>
    </ligand>
</feature>
<feature type="binding site" evidence="1">
    <location>
        <position position="127"/>
    </location>
    <ligand>
        <name>L-citrulline</name>
        <dbReference type="ChEBI" id="CHEBI:57743"/>
    </ligand>
</feature>
<feature type="binding site" evidence="1">
    <location>
        <position position="273"/>
    </location>
    <ligand>
        <name>L-citrulline</name>
        <dbReference type="ChEBI" id="CHEBI:57743"/>
    </ligand>
</feature>
<comment type="catalytic activity">
    <reaction evidence="1">
        <text>L-citrulline + L-aspartate + ATP = 2-(N(omega)-L-arginino)succinate + AMP + diphosphate + H(+)</text>
        <dbReference type="Rhea" id="RHEA:10932"/>
        <dbReference type="ChEBI" id="CHEBI:15378"/>
        <dbReference type="ChEBI" id="CHEBI:29991"/>
        <dbReference type="ChEBI" id="CHEBI:30616"/>
        <dbReference type="ChEBI" id="CHEBI:33019"/>
        <dbReference type="ChEBI" id="CHEBI:57472"/>
        <dbReference type="ChEBI" id="CHEBI:57743"/>
        <dbReference type="ChEBI" id="CHEBI:456215"/>
        <dbReference type="EC" id="6.3.4.5"/>
    </reaction>
</comment>
<comment type="pathway">
    <text evidence="1">Amino-acid biosynthesis; L-arginine biosynthesis; L-arginine from L-ornithine and carbamoyl phosphate: step 2/3.</text>
</comment>
<comment type="subunit">
    <text evidence="1">Homotetramer.</text>
</comment>
<comment type="subcellular location">
    <subcellularLocation>
        <location evidence="1">Cytoplasm</location>
    </subcellularLocation>
</comment>
<comment type="similarity">
    <text evidence="1">Belongs to the argininosuccinate synthase family. Type 1 subfamily.</text>
</comment>
<protein>
    <recommendedName>
        <fullName evidence="1">Argininosuccinate synthase</fullName>
        <ecNumber evidence="1">6.3.4.5</ecNumber>
    </recommendedName>
    <alternativeName>
        <fullName evidence="1">Citrulline--aspartate ligase</fullName>
    </alternativeName>
</protein>
<dbReference type="EC" id="6.3.4.5" evidence="1"/>
<dbReference type="EMBL" id="AE009442">
    <property type="protein sequence ID" value="AAO28176.1"/>
    <property type="molecule type" value="Genomic_DNA"/>
</dbReference>
<dbReference type="RefSeq" id="WP_011097576.1">
    <property type="nucleotide sequence ID" value="NC_004556.1"/>
</dbReference>
<dbReference type="SMR" id="P59606"/>
<dbReference type="KEGG" id="xft:PD_0291"/>
<dbReference type="HOGENOM" id="CLU_032784_4_0_6"/>
<dbReference type="UniPathway" id="UPA00068">
    <property type="reaction ID" value="UER00113"/>
</dbReference>
<dbReference type="Proteomes" id="UP000002516">
    <property type="component" value="Chromosome"/>
</dbReference>
<dbReference type="GO" id="GO:0005737">
    <property type="term" value="C:cytoplasm"/>
    <property type="evidence" value="ECO:0007669"/>
    <property type="project" value="UniProtKB-SubCell"/>
</dbReference>
<dbReference type="GO" id="GO:0004055">
    <property type="term" value="F:argininosuccinate synthase activity"/>
    <property type="evidence" value="ECO:0007669"/>
    <property type="project" value="UniProtKB-UniRule"/>
</dbReference>
<dbReference type="GO" id="GO:0005524">
    <property type="term" value="F:ATP binding"/>
    <property type="evidence" value="ECO:0007669"/>
    <property type="project" value="UniProtKB-UniRule"/>
</dbReference>
<dbReference type="GO" id="GO:0000053">
    <property type="term" value="P:argininosuccinate metabolic process"/>
    <property type="evidence" value="ECO:0007669"/>
    <property type="project" value="TreeGrafter"/>
</dbReference>
<dbReference type="GO" id="GO:0006526">
    <property type="term" value="P:L-arginine biosynthetic process"/>
    <property type="evidence" value="ECO:0007669"/>
    <property type="project" value="UniProtKB-UniRule"/>
</dbReference>
<dbReference type="GO" id="GO:0000050">
    <property type="term" value="P:urea cycle"/>
    <property type="evidence" value="ECO:0007669"/>
    <property type="project" value="TreeGrafter"/>
</dbReference>
<dbReference type="CDD" id="cd01999">
    <property type="entry name" value="ASS"/>
    <property type="match status" value="1"/>
</dbReference>
<dbReference type="FunFam" id="3.40.50.620:FF:000141">
    <property type="entry name" value="Argininosuccinate synthase"/>
    <property type="match status" value="1"/>
</dbReference>
<dbReference type="Gene3D" id="3.90.1260.10">
    <property type="entry name" value="Argininosuccinate synthetase, chain A, domain 2"/>
    <property type="match status" value="1"/>
</dbReference>
<dbReference type="Gene3D" id="3.40.50.620">
    <property type="entry name" value="HUPs"/>
    <property type="match status" value="1"/>
</dbReference>
<dbReference type="HAMAP" id="MF_00005">
    <property type="entry name" value="Arg_succ_synth_type1"/>
    <property type="match status" value="1"/>
</dbReference>
<dbReference type="InterPro" id="IPR048268">
    <property type="entry name" value="Arginosuc_syn_C"/>
</dbReference>
<dbReference type="InterPro" id="IPR048267">
    <property type="entry name" value="Arginosuc_syn_N"/>
</dbReference>
<dbReference type="InterPro" id="IPR001518">
    <property type="entry name" value="Arginosuc_synth"/>
</dbReference>
<dbReference type="InterPro" id="IPR018223">
    <property type="entry name" value="Arginosuc_synth_CS"/>
</dbReference>
<dbReference type="InterPro" id="IPR023434">
    <property type="entry name" value="Arginosuc_synth_type_1_subfam"/>
</dbReference>
<dbReference type="InterPro" id="IPR024074">
    <property type="entry name" value="AS_cat/multimer_dom_body"/>
</dbReference>
<dbReference type="InterPro" id="IPR014729">
    <property type="entry name" value="Rossmann-like_a/b/a_fold"/>
</dbReference>
<dbReference type="NCBIfam" id="TIGR00032">
    <property type="entry name" value="argG"/>
    <property type="match status" value="1"/>
</dbReference>
<dbReference type="NCBIfam" id="NF003385">
    <property type="entry name" value="PRK04527.1"/>
    <property type="match status" value="1"/>
</dbReference>
<dbReference type="PANTHER" id="PTHR11587">
    <property type="entry name" value="ARGININOSUCCINATE SYNTHASE"/>
    <property type="match status" value="1"/>
</dbReference>
<dbReference type="PANTHER" id="PTHR11587:SF2">
    <property type="entry name" value="ARGININOSUCCINATE SYNTHASE"/>
    <property type="match status" value="1"/>
</dbReference>
<dbReference type="Pfam" id="PF20979">
    <property type="entry name" value="Arginosuc_syn_C"/>
    <property type="match status" value="1"/>
</dbReference>
<dbReference type="Pfam" id="PF00764">
    <property type="entry name" value="Arginosuc_synth"/>
    <property type="match status" value="1"/>
</dbReference>
<dbReference type="SUPFAM" id="SSF52402">
    <property type="entry name" value="Adenine nucleotide alpha hydrolases-like"/>
    <property type="match status" value="1"/>
</dbReference>
<dbReference type="SUPFAM" id="SSF69864">
    <property type="entry name" value="Argininosuccinate synthetase, C-terminal domain"/>
    <property type="match status" value="1"/>
</dbReference>
<dbReference type="PROSITE" id="PS00564">
    <property type="entry name" value="ARGININOSUCCIN_SYN_1"/>
    <property type="match status" value="1"/>
</dbReference>
<dbReference type="PROSITE" id="PS00565">
    <property type="entry name" value="ARGININOSUCCIN_SYN_2"/>
    <property type="match status" value="1"/>
</dbReference>
<gene>
    <name evidence="1" type="primary">argG</name>
    <name type="ordered locus">PD_0291</name>
</gene>
<proteinExistence type="inferred from homology"/>
<name>ASSY_XYLFT</name>
<evidence type="ECO:0000255" key="1">
    <source>
        <dbReference type="HAMAP-Rule" id="MF_00005"/>
    </source>
</evidence>